<evidence type="ECO:0000255" key="1">
    <source>
        <dbReference type="HAMAP-Rule" id="MF_01554"/>
    </source>
</evidence>
<dbReference type="EC" id="5.4.2.10" evidence="1"/>
<dbReference type="EMBL" id="CP000440">
    <property type="protein sequence ID" value="ABI86734.1"/>
    <property type="molecule type" value="Genomic_DNA"/>
</dbReference>
<dbReference type="RefSeq" id="WP_011656502.1">
    <property type="nucleotide sequence ID" value="NZ_CP009798.1"/>
</dbReference>
<dbReference type="SMR" id="Q0BGI9"/>
<dbReference type="GeneID" id="93083419"/>
<dbReference type="KEGG" id="bam:Bamb_1176"/>
<dbReference type="PATRIC" id="fig|339670.21.peg.386"/>
<dbReference type="eggNOG" id="COG1109">
    <property type="taxonomic scope" value="Bacteria"/>
</dbReference>
<dbReference type="Proteomes" id="UP000000662">
    <property type="component" value="Chromosome 1"/>
</dbReference>
<dbReference type="GO" id="GO:0005829">
    <property type="term" value="C:cytosol"/>
    <property type="evidence" value="ECO:0007669"/>
    <property type="project" value="TreeGrafter"/>
</dbReference>
<dbReference type="GO" id="GO:0000287">
    <property type="term" value="F:magnesium ion binding"/>
    <property type="evidence" value="ECO:0007669"/>
    <property type="project" value="UniProtKB-UniRule"/>
</dbReference>
<dbReference type="GO" id="GO:0008966">
    <property type="term" value="F:phosphoglucosamine mutase activity"/>
    <property type="evidence" value="ECO:0007669"/>
    <property type="project" value="UniProtKB-UniRule"/>
</dbReference>
<dbReference type="GO" id="GO:0004615">
    <property type="term" value="F:phosphomannomutase activity"/>
    <property type="evidence" value="ECO:0007669"/>
    <property type="project" value="TreeGrafter"/>
</dbReference>
<dbReference type="GO" id="GO:0005975">
    <property type="term" value="P:carbohydrate metabolic process"/>
    <property type="evidence" value="ECO:0007669"/>
    <property type="project" value="InterPro"/>
</dbReference>
<dbReference type="GO" id="GO:0009252">
    <property type="term" value="P:peptidoglycan biosynthetic process"/>
    <property type="evidence" value="ECO:0007669"/>
    <property type="project" value="TreeGrafter"/>
</dbReference>
<dbReference type="GO" id="GO:0006048">
    <property type="term" value="P:UDP-N-acetylglucosamine biosynthetic process"/>
    <property type="evidence" value="ECO:0007669"/>
    <property type="project" value="TreeGrafter"/>
</dbReference>
<dbReference type="CDD" id="cd05802">
    <property type="entry name" value="GlmM"/>
    <property type="match status" value="1"/>
</dbReference>
<dbReference type="FunFam" id="3.30.310.50:FF:000001">
    <property type="entry name" value="Phosphoglucosamine mutase"/>
    <property type="match status" value="1"/>
</dbReference>
<dbReference type="FunFam" id="3.40.120.10:FF:000001">
    <property type="entry name" value="Phosphoglucosamine mutase"/>
    <property type="match status" value="1"/>
</dbReference>
<dbReference type="FunFam" id="3.40.120.10:FF:000003">
    <property type="entry name" value="Phosphoglucosamine mutase"/>
    <property type="match status" value="1"/>
</dbReference>
<dbReference type="Gene3D" id="3.40.120.10">
    <property type="entry name" value="Alpha-D-Glucose-1,6-Bisphosphate, subunit A, domain 3"/>
    <property type="match status" value="3"/>
</dbReference>
<dbReference type="Gene3D" id="3.30.310.50">
    <property type="entry name" value="Alpha-D-phosphohexomutase, C-terminal domain"/>
    <property type="match status" value="1"/>
</dbReference>
<dbReference type="HAMAP" id="MF_01554_B">
    <property type="entry name" value="GlmM_B"/>
    <property type="match status" value="1"/>
</dbReference>
<dbReference type="InterPro" id="IPR005844">
    <property type="entry name" value="A-D-PHexomutase_a/b/a-I"/>
</dbReference>
<dbReference type="InterPro" id="IPR016055">
    <property type="entry name" value="A-D-PHexomutase_a/b/a-I/II/III"/>
</dbReference>
<dbReference type="InterPro" id="IPR005845">
    <property type="entry name" value="A-D-PHexomutase_a/b/a-II"/>
</dbReference>
<dbReference type="InterPro" id="IPR005846">
    <property type="entry name" value="A-D-PHexomutase_a/b/a-III"/>
</dbReference>
<dbReference type="InterPro" id="IPR005843">
    <property type="entry name" value="A-D-PHexomutase_C"/>
</dbReference>
<dbReference type="InterPro" id="IPR036900">
    <property type="entry name" value="A-D-PHexomutase_C_sf"/>
</dbReference>
<dbReference type="InterPro" id="IPR016066">
    <property type="entry name" value="A-D-PHexomutase_CS"/>
</dbReference>
<dbReference type="InterPro" id="IPR005841">
    <property type="entry name" value="Alpha-D-phosphohexomutase_SF"/>
</dbReference>
<dbReference type="InterPro" id="IPR006352">
    <property type="entry name" value="GlmM_bact"/>
</dbReference>
<dbReference type="InterPro" id="IPR050060">
    <property type="entry name" value="Phosphoglucosamine_mutase"/>
</dbReference>
<dbReference type="NCBIfam" id="TIGR01455">
    <property type="entry name" value="glmM"/>
    <property type="match status" value="1"/>
</dbReference>
<dbReference type="NCBIfam" id="NF008139">
    <property type="entry name" value="PRK10887.1"/>
    <property type="match status" value="1"/>
</dbReference>
<dbReference type="PANTHER" id="PTHR42946:SF1">
    <property type="entry name" value="PHOSPHOGLUCOMUTASE (ALPHA-D-GLUCOSE-1,6-BISPHOSPHATE-DEPENDENT)"/>
    <property type="match status" value="1"/>
</dbReference>
<dbReference type="PANTHER" id="PTHR42946">
    <property type="entry name" value="PHOSPHOHEXOSE MUTASE"/>
    <property type="match status" value="1"/>
</dbReference>
<dbReference type="Pfam" id="PF02878">
    <property type="entry name" value="PGM_PMM_I"/>
    <property type="match status" value="1"/>
</dbReference>
<dbReference type="Pfam" id="PF02879">
    <property type="entry name" value="PGM_PMM_II"/>
    <property type="match status" value="1"/>
</dbReference>
<dbReference type="Pfam" id="PF02880">
    <property type="entry name" value="PGM_PMM_III"/>
    <property type="match status" value="1"/>
</dbReference>
<dbReference type="Pfam" id="PF00408">
    <property type="entry name" value="PGM_PMM_IV"/>
    <property type="match status" value="1"/>
</dbReference>
<dbReference type="PRINTS" id="PR00509">
    <property type="entry name" value="PGMPMM"/>
</dbReference>
<dbReference type="SUPFAM" id="SSF55957">
    <property type="entry name" value="Phosphoglucomutase, C-terminal domain"/>
    <property type="match status" value="1"/>
</dbReference>
<dbReference type="SUPFAM" id="SSF53738">
    <property type="entry name" value="Phosphoglucomutase, first 3 domains"/>
    <property type="match status" value="3"/>
</dbReference>
<dbReference type="PROSITE" id="PS00710">
    <property type="entry name" value="PGM_PMM"/>
    <property type="match status" value="1"/>
</dbReference>
<sequence length="451" mass="47303">MGRRYFGTDGIRGTVGEAPITPDFVLRLGYAAGKVLAGTADVAAGARPTVLIGKDTRVSGYMLEAALEAGFSAAGVDVMLAGPMPTPGVAYLTRALRLSAGVVISASHNPYQDNGIKFFSADGNKLPDETEAAIEAWLDKPLECASSDRLGKARRLEDAAGRYIEFCKSTFPAAYDLRGLKLVIDCAHGAAYQIAPHVFHELGADVIPIGVAPNGFNINDGVGATAPDALVRAVRANHADLGIALDGDADRLQVVDSTGRLYNGDELLYVLVKDRIATAGKVDGAVGTLMTNLAVEVALQREGVPFVRAAVGDRYVLEQLRERGWQLGAEGSGHILSLDRHSTGDGIVSALLVLAALKRSDRTLAQMLDGVTLFPQKLINVRMKPGADWKGSASIRAAIDAAEGALAGSGRVLIRASGTEPVLRVMVEAQQAADATRHAEAIADAVRMATS</sequence>
<reference key="1">
    <citation type="submission" date="2006-08" db="EMBL/GenBank/DDBJ databases">
        <title>Complete sequence of chromosome 1 of Burkholderia cepacia AMMD.</title>
        <authorList>
            <person name="Copeland A."/>
            <person name="Lucas S."/>
            <person name="Lapidus A."/>
            <person name="Barry K."/>
            <person name="Detter J.C."/>
            <person name="Glavina del Rio T."/>
            <person name="Hammon N."/>
            <person name="Israni S."/>
            <person name="Pitluck S."/>
            <person name="Bruce D."/>
            <person name="Chain P."/>
            <person name="Malfatti S."/>
            <person name="Shin M."/>
            <person name="Vergez L."/>
            <person name="Schmutz J."/>
            <person name="Larimer F."/>
            <person name="Land M."/>
            <person name="Hauser L."/>
            <person name="Kyrpides N."/>
            <person name="Kim E."/>
            <person name="Parke J."/>
            <person name="Coenye T."/>
            <person name="Konstantinidis K."/>
            <person name="Ramette A."/>
            <person name="Tiedje J."/>
            <person name="Richardson P."/>
        </authorList>
    </citation>
    <scope>NUCLEOTIDE SEQUENCE [LARGE SCALE GENOMIC DNA]</scope>
    <source>
        <strain>ATCC BAA-244 / DSM 16087 / CCUG 44356 / LMG 19182 / AMMD</strain>
    </source>
</reference>
<keyword id="KW-0413">Isomerase</keyword>
<keyword id="KW-0460">Magnesium</keyword>
<keyword id="KW-0479">Metal-binding</keyword>
<keyword id="KW-0597">Phosphoprotein</keyword>
<feature type="chain" id="PRO_0000301290" description="Phosphoglucosamine mutase">
    <location>
        <begin position="1"/>
        <end position="451"/>
    </location>
</feature>
<feature type="active site" description="Phosphoserine intermediate" evidence="1">
    <location>
        <position position="107"/>
    </location>
</feature>
<feature type="binding site" description="via phosphate group" evidence="1">
    <location>
        <position position="107"/>
    </location>
    <ligand>
        <name>Mg(2+)</name>
        <dbReference type="ChEBI" id="CHEBI:18420"/>
    </ligand>
</feature>
<feature type="binding site" evidence="1">
    <location>
        <position position="246"/>
    </location>
    <ligand>
        <name>Mg(2+)</name>
        <dbReference type="ChEBI" id="CHEBI:18420"/>
    </ligand>
</feature>
<feature type="binding site" evidence="1">
    <location>
        <position position="248"/>
    </location>
    <ligand>
        <name>Mg(2+)</name>
        <dbReference type="ChEBI" id="CHEBI:18420"/>
    </ligand>
</feature>
<feature type="binding site" evidence="1">
    <location>
        <position position="250"/>
    </location>
    <ligand>
        <name>Mg(2+)</name>
        <dbReference type="ChEBI" id="CHEBI:18420"/>
    </ligand>
</feature>
<feature type="modified residue" description="Phosphoserine" evidence="1">
    <location>
        <position position="107"/>
    </location>
</feature>
<proteinExistence type="inferred from homology"/>
<organism>
    <name type="scientific">Burkholderia ambifaria (strain ATCC BAA-244 / DSM 16087 / CCUG 44356 / LMG 19182 / AMMD)</name>
    <name type="common">Burkholderia cepacia (strain AMMD)</name>
    <dbReference type="NCBI Taxonomy" id="339670"/>
    <lineage>
        <taxon>Bacteria</taxon>
        <taxon>Pseudomonadati</taxon>
        <taxon>Pseudomonadota</taxon>
        <taxon>Betaproteobacteria</taxon>
        <taxon>Burkholderiales</taxon>
        <taxon>Burkholderiaceae</taxon>
        <taxon>Burkholderia</taxon>
        <taxon>Burkholderia cepacia complex</taxon>
    </lineage>
</organism>
<protein>
    <recommendedName>
        <fullName evidence="1">Phosphoglucosamine mutase</fullName>
        <ecNumber evidence="1">5.4.2.10</ecNumber>
    </recommendedName>
</protein>
<gene>
    <name evidence="1" type="primary">glmM</name>
    <name type="ordered locus">Bamb_1176</name>
</gene>
<comment type="function">
    <text evidence="1">Catalyzes the conversion of glucosamine-6-phosphate to glucosamine-1-phosphate.</text>
</comment>
<comment type="catalytic activity">
    <reaction evidence="1">
        <text>alpha-D-glucosamine 1-phosphate = D-glucosamine 6-phosphate</text>
        <dbReference type="Rhea" id="RHEA:23424"/>
        <dbReference type="ChEBI" id="CHEBI:58516"/>
        <dbReference type="ChEBI" id="CHEBI:58725"/>
        <dbReference type="EC" id="5.4.2.10"/>
    </reaction>
</comment>
<comment type="cofactor">
    <cofactor evidence="1">
        <name>Mg(2+)</name>
        <dbReference type="ChEBI" id="CHEBI:18420"/>
    </cofactor>
    <text evidence="1">Binds 1 Mg(2+) ion per subunit.</text>
</comment>
<comment type="PTM">
    <text evidence="1">Activated by phosphorylation.</text>
</comment>
<comment type="similarity">
    <text evidence="1">Belongs to the phosphohexose mutase family.</text>
</comment>
<accession>Q0BGI9</accession>
<name>GLMM_BURCM</name>